<name>SECF_MYCLE</name>
<accession>P38386</accession>
<accession>O69486</accession>
<comment type="function">
    <text evidence="1">Part of the Sec protein translocase complex. Interacts with the SecYEG preprotein conducting channel. SecDF uses the proton motive force (PMF) to complete protein translocation after the ATP-dependent function of SecA.</text>
</comment>
<comment type="subunit">
    <text evidence="1">Forms a complex with SecD. Part of the essential Sec protein translocation apparatus which comprises SecA, SecYEG and auxiliary proteins SecDF. Other proteins may also be involved.</text>
</comment>
<comment type="subcellular location">
    <subcellularLocation>
        <location evidence="1">Cell membrane</location>
        <topology evidence="1">Multi-pass membrane protein</topology>
    </subcellularLocation>
</comment>
<comment type="similarity">
    <text evidence="1">Belongs to the SecD/SecF family. SecF subfamily.</text>
</comment>
<comment type="sequence caution" evidence="3">
    <conflict type="frameshift">
        <sequence resource="EMBL-CDS" id="AAA17100"/>
    </conflict>
</comment>
<reference key="1">
    <citation type="submission" date="1994-03" db="EMBL/GenBank/DDBJ databases">
        <authorList>
            <person name="Smith D.R."/>
            <person name="Robison K."/>
        </authorList>
    </citation>
    <scope>NUCLEOTIDE SEQUENCE [GENOMIC DNA]</scope>
</reference>
<reference key="2">
    <citation type="journal article" date="2001" name="Nature">
        <title>Massive gene decay in the leprosy bacillus.</title>
        <authorList>
            <person name="Cole S.T."/>
            <person name="Eiglmeier K."/>
            <person name="Parkhill J."/>
            <person name="James K.D."/>
            <person name="Thomson N.R."/>
            <person name="Wheeler P.R."/>
            <person name="Honore N."/>
            <person name="Garnier T."/>
            <person name="Churcher C.M."/>
            <person name="Harris D.E."/>
            <person name="Mungall K.L."/>
            <person name="Basham D."/>
            <person name="Brown D."/>
            <person name="Chillingworth T."/>
            <person name="Connor R."/>
            <person name="Davies R.M."/>
            <person name="Devlin K."/>
            <person name="Duthoy S."/>
            <person name="Feltwell T."/>
            <person name="Fraser A."/>
            <person name="Hamlin N."/>
            <person name="Holroyd S."/>
            <person name="Hornsby T."/>
            <person name="Jagels K."/>
            <person name="Lacroix C."/>
            <person name="Maclean J."/>
            <person name="Moule S."/>
            <person name="Murphy L.D."/>
            <person name="Oliver K."/>
            <person name="Quail M.A."/>
            <person name="Rajandream M.A."/>
            <person name="Rutherford K.M."/>
            <person name="Rutter S."/>
            <person name="Seeger K."/>
            <person name="Simon S."/>
            <person name="Simmonds M."/>
            <person name="Skelton J."/>
            <person name="Squares R."/>
            <person name="Squares S."/>
            <person name="Stevens K."/>
            <person name="Taylor K."/>
            <person name="Whitehead S."/>
            <person name="Woodward J.R."/>
            <person name="Barrell B.G."/>
        </authorList>
    </citation>
    <scope>NUCLEOTIDE SEQUENCE [LARGE SCALE GENOMIC DNA]</scope>
    <source>
        <strain>TN</strain>
    </source>
</reference>
<dbReference type="EMBL" id="U00011">
    <property type="protein sequence ID" value="AAA17100.1"/>
    <property type="status" value="ALT_FRAME"/>
    <property type="molecule type" value="Genomic_DNA"/>
</dbReference>
<dbReference type="EMBL" id="AL023591">
    <property type="protein sequence ID" value="CAA19081.1"/>
    <property type="molecule type" value="Genomic_DNA"/>
</dbReference>
<dbReference type="EMBL" id="AL583918">
    <property type="protein sequence ID" value="CAC29996.1"/>
    <property type="molecule type" value="Genomic_DNA"/>
</dbReference>
<dbReference type="PIR" id="H86969">
    <property type="entry name" value="H86969"/>
</dbReference>
<dbReference type="PIR" id="S72736">
    <property type="entry name" value="S72736"/>
</dbReference>
<dbReference type="RefSeq" id="NP_301428.1">
    <property type="nucleotide sequence ID" value="NC_002677.1"/>
</dbReference>
<dbReference type="RefSeq" id="WP_010907752.1">
    <property type="nucleotide sequence ID" value="NC_002677.1"/>
</dbReference>
<dbReference type="SMR" id="P38386"/>
<dbReference type="STRING" id="272631.gene:17574309"/>
<dbReference type="KEGG" id="mle:ML0488"/>
<dbReference type="PATRIC" id="fig|272631.5.peg.852"/>
<dbReference type="Leproma" id="ML0488"/>
<dbReference type="eggNOG" id="COG0341">
    <property type="taxonomic scope" value="Bacteria"/>
</dbReference>
<dbReference type="HOGENOM" id="CLU_050012_2_0_11"/>
<dbReference type="OrthoDB" id="9774769at2"/>
<dbReference type="Proteomes" id="UP000000806">
    <property type="component" value="Chromosome"/>
</dbReference>
<dbReference type="GO" id="GO:0005886">
    <property type="term" value="C:plasma membrane"/>
    <property type="evidence" value="ECO:0007669"/>
    <property type="project" value="UniProtKB-SubCell"/>
</dbReference>
<dbReference type="GO" id="GO:0015450">
    <property type="term" value="F:protein-transporting ATPase activity"/>
    <property type="evidence" value="ECO:0007669"/>
    <property type="project" value="InterPro"/>
</dbReference>
<dbReference type="GO" id="GO:0065002">
    <property type="term" value="P:intracellular protein transmembrane transport"/>
    <property type="evidence" value="ECO:0007669"/>
    <property type="project" value="UniProtKB-UniRule"/>
</dbReference>
<dbReference type="GO" id="GO:0006605">
    <property type="term" value="P:protein targeting"/>
    <property type="evidence" value="ECO:0007669"/>
    <property type="project" value="UniProtKB-UniRule"/>
</dbReference>
<dbReference type="GO" id="GO:0043952">
    <property type="term" value="P:protein transport by the Sec complex"/>
    <property type="evidence" value="ECO:0007669"/>
    <property type="project" value="UniProtKB-UniRule"/>
</dbReference>
<dbReference type="FunFam" id="1.20.1640.10:FF:000023">
    <property type="entry name" value="Protein-export membrane protein SecF"/>
    <property type="match status" value="1"/>
</dbReference>
<dbReference type="Gene3D" id="1.20.1640.10">
    <property type="entry name" value="Multidrug efflux transporter AcrB transmembrane domain"/>
    <property type="match status" value="1"/>
</dbReference>
<dbReference type="HAMAP" id="MF_01464_B">
    <property type="entry name" value="SecF_B"/>
    <property type="match status" value="1"/>
</dbReference>
<dbReference type="InterPro" id="IPR022813">
    <property type="entry name" value="SecD/SecF_arch_bac"/>
</dbReference>
<dbReference type="InterPro" id="IPR022645">
    <property type="entry name" value="SecD/SecF_bac"/>
</dbReference>
<dbReference type="InterPro" id="IPR022646">
    <property type="entry name" value="SecD/SecF_CS"/>
</dbReference>
<dbReference type="InterPro" id="IPR048634">
    <property type="entry name" value="SecD_SecF_C"/>
</dbReference>
<dbReference type="InterPro" id="IPR055344">
    <property type="entry name" value="SecD_SecF_C_bact"/>
</dbReference>
<dbReference type="InterPro" id="IPR005665">
    <property type="entry name" value="SecF_bac"/>
</dbReference>
<dbReference type="NCBIfam" id="TIGR00916">
    <property type="entry name" value="2A0604s01"/>
    <property type="match status" value="1"/>
</dbReference>
<dbReference type="NCBIfam" id="TIGR00966">
    <property type="entry name" value="transloc_SecF"/>
    <property type="match status" value="1"/>
</dbReference>
<dbReference type="PANTHER" id="PTHR30081:SF8">
    <property type="entry name" value="PROTEIN TRANSLOCASE SUBUNIT SECF"/>
    <property type="match status" value="1"/>
</dbReference>
<dbReference type="PANTHER" id="PTHR30081">
    <property type="entry name" value="PROTEIN-EXPORT MEMBRANE PROTEIN SEC"/>
    <property type="match status" value="1"/>
</dbReference>
<dbReference type="Pfam" id="PF07549">
    <property type="entry name" value="Sec_GG"/>
    <property type="match status" value="1"/>
</dbReference>
<dbReference type="Pfam" id="PF02355">
    <property type="entry name" value="SecD_SecF_C"/>
    <property type="match status" value="1"/>
</dbReference>
<dbReference type="PRINTS" id="PR01755">
    <property type="entry name" value="SECFTRNLCASE"/>
</dbReference>
<dbReference type="SUPFAM" id="SSF82866">
    <property type="entry name" value="Multidrug efflux transporter AcrB transmembrane domain"/>
    <property type="match status" value="1"/>
</dbReference>
<proteinExistence type="inferred from homology"/>
<evidence type="ECO:0000255" key="1">
    <source>
        <dbReference type="HAMAP-Rule" id="MF_01464"/>
    </source>
</evidence>
<evidence type="ECO:0000256" key="2">
    <source>
        <dbReference type="SAM" id="MobiDB-lite"/>
    </source>
</evidence>
<evidence type="ECO:0000305" key="3"/>
<keyword id="KW-1003">Cell membrane</keyword>
<keyword id="KW-0472">Membrane</keyword>
<keyword id="KW-0653">Protein transport</keyword>
<keyword id="KW-1185">Reference proteome</keyword>
<keyword id="KW-0811">Translocation</keyword>
<keyword id="KW-0812">Transmembrane</keyword>
<keyword id="KW-1133">Transmembrane helix</keyword>
<keyword id="KW-0813">Transport</keyword>
<feature type="chain" id="PRO_0000095982" description="Protein translocase subunit SecF">
    <location>
        <begin position="1"/>
        <end position="471"/>
    </location>
</feature>
<feature type="transmembrane region" description="Helical" evidence="1">
    <location>
        <begin position="88"/>
        <end position="108"/>
    </location>
</feature>
<feature type="transmembrane region" description="Helical" evidence="1">
    <location>
        <begin position="211"/>
        <end position="231"/>
    </location>
</feature>
<feature type="transmembrane region" description="Helical" evidence="1">
    <location>
        <begin position="242"/>
        <end position="262"/>
    </location>
</feature>
<feature type="transmembrane region" description="Helical" evidence="1">
    <location>
        <begin position="267"/>
        <end position="287"/>
    </location>
</feature>
<feature type="transmembrane region" description="Helical" evidence="1">
    <location>
        <begin position="325"/>
        <end position="345"/>
    </location>
</feature>
<feature type="transmembrane region" description="Helical" evidence="1">
    <location>
        <begin position="355"/>
        <end position="375"/>
    </location>
</feature>
<feature type="region of interest" description="Disordered" evidence="2">
    <location>
        <begin position="1"/>
        <end position="29"/>
    </location>
</feature>
<feature type="region of interest" description="Disordered" evidence="2">
    <location>
        <begin position="393"/>
        <end position="471"/>
    </location>
</feature>
<feature type="compositionally biased region" description="Basic and acidic residues" evidence="2">
    <location>
        <begin position="13"/>
        <end position="23"/>
    </location>
</feature>
<feature type="compositionally biased region" description="Polar residues" evidence="2">
    <location>
        <begin position="415"/>
        <end position="431"/>
    </location>
</feature>
<feature type="compositionally biased region" description="Low complexity" evidence="2">
    <location>
        <begin position="448"/>
        <end position="460"/>
    </location>
</feature>
<feature type="compositionally biased region" description="Basic residues" evidence="2">
    <location>
        <begin position="461"/>
        <end position="471"/>
    </location>
</feature>
<organism>
    <name type="scientific">Mycobacterium leprae (strain TN)</name>
    <dbReference type="NCBI Taxonomy" id="272631"/>
    <lineage>
        <taxon>Bacteria</taxon>
        <taxon>Bacillati</taxon>
        <taxon>Actinomycetota</taxon>
        <taxon>Actinomycetes</taxon>
        <taxon>Mycobacteriales</taxon>
        <taxon>Mycobacteriaceae</taxon>
        <taxon>Mycobacterium</taxon>
    </lineage>
</organism>
<sequence>MVSRAKVGAETTKGIDEPDRNDNTDDNGAGAVEVTEAAEDAVELTNDISTQLPQHGFLARFYTGLSRLYTGTGVFEVVGRRRLWYSVGGVIVAVAVLSIIVRGFTFGIDFKGGTTVSMPVSPGVGGTGAIEVAQVADVFKKTLGSDPESVVVVGNGASATVRISSKTLSNDQTSKLRNALFDAFGPKGADAKPSKQAISDAAVSETWGGQITKKVVIALVVFLVLVGLYITVRYERYMAISALTTMCFDLTVTAGVYSLVGFEVTPATVIGLLTILGFSLYDTVIVFDKVEENTHGFQHTTRRTFAEQANLAINQTFMRSINTSLISVLPVLALMVVAVWLLGVGTLKDLALVQLVGIIVGTYSSIFFATPLLVTLRERTELVRTHTRRVVKRRTLGSQVGKKNADSHVAAGTRKPQNQAESCADASSQEGTEVATASVPTVLSKLAPGVRPVRPTGTRRPTGKRNNVGRR</sequence>
<protein>
    <recommendedName>
        <fullName>Protein translocase subunit SecF</fullName>
    </recommendedName>
</protein>
<gene>
    <name evidence="1" type="primary">secF</name>
    <name type="ordered locus">ML0488</name>
    <name type="ORF">B1177_C3_239</name>
    <name type="ORF">MLCB1259.06</name>
</gene>